<gene>
    <name type="primary">SUB6</name>
</gene>
<evidence type="ECO:0000250" key="1"/>
<evidence type="ECO:0000255" key="2"/>
<evidence type="ECO:0000255" key="3">
    <source>
        <dbReference type="PROSITE-ProRule" id="PRU01240"/>
    </source>
</evidence>
<evidence type="ECO:0000305" key="4"/>
<dbReference type="EC" id="3.4.21.-"/>
<dbReference type="EMBL" id="AY439110">
    <property type="protein sequence ID" value="AAS45678.1"/>
    <property type="molecule type" value="Genomic_DNA"/>
</dbReference>
<dbReference type="SMR" id="Q5VJ72"/>
<dbReference type="GlyCosmos" id="Q5VJ72">
    <property type="glycosylation" value="6 sites, No reported glycans"/>
</dbReference>
<dbReference type="GO" id="GO:0005576">
    <property type="term" value="C:extracellular region"/>
    <property type="evidence" value="ECO:0007669"/>
    <property type="project" value="UniProtKB-SubCell"/>
</dbReference>
<dbReference type="GO" id="GO:0004252">
    <property type="term" value="F:serine-type endopeptidase activity"/>
    <property type="evidence" value="ECO:0007669"/>
    <property type="project" value="InterPro"/>
</dbReference>
<dbReference type="GO" id="GO:0006508">
    <property type="term" value="P:proteolysis"/>
    <property type="evidence" value="ECO:0007669"/>
    <property type="project" value="UniProtKB-KW"/>
</dbReference>
<dbReference type="CDD" id="cd04077">
    <property type="entry name" value="Peptidases_S8_PCSK9_ProteinaseK_like"/>
    <property type="match status" value="1"/>
</dbReference>
<dbReference type="FunFam" id="3.40.50.200:FF:000014">
    <property type="entry name" value="Proteinase K"/>
    <property type="match status" value="1"/>
</dbReference>
<dbReference type="Gene3D" id="3.30.70.80">
    <property type="entry name" value="Peptidase S8 propeptide/proteinase inhibitor I9"/>
    <property type="match status" value="1"/>
</dbReference>
<dbReference type="Gene3D" id="3.40.50.200">
    <property type="entry name" value="Peptidase S8/S53 domain"/>
    <property type="match status" value="1"/>
</dbReference>
<dbReference type="InterPro" id="IPR034193">
    <property type="entry name" value="PCSK9_ProteinaseK-like"/>
</dbReference>
<dbReference type="InterPro" id="IPR000209">
    <property type="entry name" value="Peptidase_S8/S53_dom"/>
</dbReference>
<dbReference type="InterPro" id="IPR036852">
    <property type="entry name" value="Peptidase_S8/S53_dom_sf"/>
</dbReference>
<dbReference type="InterPro" id="IPR023827">
    <property type="entry name" value="Peptidase_S8_Asp-AS"/>
</dbReference>
<dbReference type="InterPro" id="IPR022398">
    <property type="entry name" value="Peptidase_S8_His-AS"/>
</dbReference>
<dbReference type="InterPro" id="IPR023828">
    <property type="entry name" value="Peptidase_S8_Ser-AS"/>
</dbReference>
<dbReference type="InterPro" id="IPR050131">
    <property type="entry name" value="Peptidase_S8_subtilisin-like"/>
</dbReference>
<dbReference type="InterPro" id="IPR015500">
    <property type="entry name" value="Peptidase_S8_subtilisin-rel"/>
</dbReference>
<dbReference type="InterPro" id="IPR010259">
    <property type="entry name" value="S8pro/Inhibitor_I9"/>
</dbReference>
<dbReference type="InterPro" id="IPR037045">
    <property type="entry name" value="S8pro/Inhibitor_I9_sf"/>
</dbReference>
<dbReference type="PANTHER" id="PTHR43806:SF11">
    <property type="entry name" value="CEREVISIN-RELATED"/>
    <property type="match status" value="1"/>
</dbReference>
<dbReference type="PANTHER" id="PTHR43806">
    <property type="entry name" value="PEPTIDASE S8"/>
    <property type="match status" value="1"/>
</dbReference>
<dbReference type="Pfam" id="PF05922">
    <property type="entry name" value="Inhibitor_I9"/>
    <property type="match status" value="1"/>
</dbReference>
<dbReference type="Pfam" id="PF00082">
    <property type="entry name" value="Peptidase_S8"/>
    <property type="match status" value="1"/>
</dbReference>
<dbReference type="PRINTS" id="PR00723">
    <property type="entry name" value="SUBTILISIN"/>
</dbReference>
<dbReference type="SUPFAM" id="SSF54897">
    <property type="entry name" value="Protease propeptides/inhibitors"/>
    <property type="match status" value="1"/>
</dbReference>
<dbReference type="SUPFAM" id="SSF52743">
    <property type="entry name" value="Subtilisin-like"/>
    <property type="match status" value="1"/>
</dbReference>
<dbReference type="PROSITE" id="PS51892">
    <property type="entry name" value="SUBTILASE"/>
    <property type="match status" value="1"/>
</dbReference>
<dbReference type="PROSITE" id="PS00136">
    <property type="entry name" value="SUBTILASE_ASP"/>
    <property type="match status" value="1"/>
</dbReference>
<dbReference type="PROSITE" id="PS00137">
    <property type="entry name" value="SUBTILASE_HIS"/>
    <property type="match status" value="1"/>
</dbReference>
<dbReference type="PROSITE" id="PS00138">
    <property type="entry name" value="SUBTILASE_SER"/>
    <property type="match status" value="1"/>
</dbReference>
<reference key="1">
    <citation type="submission" date="2003-10" db="EMBL/GenBank/DDBJ databases">
        <title>Subtilisin-like proteases gene family in Dermatophytes.</title>
        <authorList>
            <person name="Jousson O."/>
            <person name="Monod M."/>
        </authorList>
    </citation>
    <scope>NUCLEOTIDE SEQUENCE [GENOMIC DNA]</scope>
</reference>
<proteinExistence type="inferred from homology"/>
<accession>Q5VJ72</accession>
<name>SUB6_TRIVC</name>
<organism>
    <name type="scientific">Trichophyton verrucosum</name>
    <name type="common">Cattle ringworm fungus</name>
    <dbReference type="NCBI Taxonomy" id="63417"/>
    <lineage>
        <taxon>Eukaryota</taxon>
        <taxon>Fungi</taxon>
        <taxon>Dikarya</taxon>
        <taxon>Ascomycota</taxon>
        <taxon>Pezizomycotina</taxon>
        <taxon>Eurotiomycetes</taxon>
        <taxon>Eurotiomycetidae</taxon>
        <taxon>Onygenales</taxon>
        <taxon>Arthrodermataceae</taxon>
        <taxon>Trichophyton</taxon>
    </lineage>
</organism>
<keyword id="KW-0325">Glycoprotein</keyword>
<keyword id="KW-0378">Hydrolase</keyword>
<keyword id="KW-0645">Protease</keyword>
<keyword id="KW-0964">Secreted</keyword>
<keyword id="KW-0720">Serine protease</keyword>
<keyword id="KW-0732">Signal</keyword>
<keyword id="KW-0843">Virulence</keyword>
<keyword id="KW-0865">Zymogen</keyword>
<comment type="function">
    <text evidence="1">Secreted subtilisin-like serine protease with keratinolytic activity that contributes to pathogenicity.</text>
</comment>
<comment type="subcellular location">
    <subcellularLocation>
        <location evidence="1">Secreted</location>
    </subcellularLocation>
</comment>
<comment type="similarity">
    <text evidence="4">Belongs to the peptidase S8 family.</text>
</comment>
<feature type="signal peptide" evidence="2">
    <location>
        <begin position="1"/>
        <end position="20"/>
    </location>
</feature>
<feature type="propeptide" id="PRO_0000380816" evidence="1">
    <location>
        <begin position="21"/>
        <end position="127"/>
    </location>
</feature>
<feature type="chain" id="PRO_0000380817" description="Subtilisin-like protease 6">
    <location>
        <begin position="128"/>
        <end position="412"/>
    </location>
</feature>
<feature type="domain" description="Inhibitor I9" evidence="2">
    <location>
        <begin position="36"/>
        <end position="120"/>
    </location>
</feature>
<feature type="domain" description="Peptidase S8" evidence="3">
    <location>
        <begin position="135"/>
        <end position="412"/>
    </location>
</feature>
<feature type="active site" description="Charge relay system" evidence="3">
    <location>
        <position position="167"/>
    </location>
</feature>
<feature type="active site" description="Charge relay system" evidence="3">
    <location>
        <position position="198"/>
    </location>
</feature>
<feature type="active site" description="Charge relay system" evidence="3">
    <location>
        <position position="358"/>
    </location>
</feature>
<feature type="glycosylation site" description="N-linked (GlcNAc...) asparagine" evidence="2">
    <location>
        <position position="123"/>
    </location>
</feature>
<feature type="glycosylation site" description="N-linked (GlcNAc...) asparagine" evidence="2">
    <location>
        <position position="126"/>
    </location>
</feature>
<feature type="glycosylation site" description="N-linked (GlcNAc...) asparagine" evidence="2">
    <location>
        <position position="252"/>
    </location>
</feature>
<feature type="glycosylation site" description="N-linked (GlcNAc...) asparagine" evidence="2">
    <location>
        <position position="264"/>
    </location>
</feature>
<feature type="glycosylation site" description="N-linked (GlcNAc...) asparagine" evidence="2">
    <location>
        <position position="325"/>
    </location>
</feature>
<feature type="glycosylation site" description="N-linked (GlcNAc...) asparagine" evidence="2">
    <location>
        <position position="408"/>
    </location>
</feature>
<protein>
    <recommendedName>
        <fullName>Subtilisin-like protease 6</fullName>
        <ecNumber>3.4.21.-</ecNumber>
    </recommendedName>
</protein>
<sequence>MGFITKAIPIVLAALSTVNGARILEAGPHAETIPNKYIVVMKKDVSEESFSAHTTWLSQTLNSRLMRRAGSSKPMAGMQNKYSLGGIFRAYSGEFDDAMIKDISSHDDVDFIEPDFVVRATTNGTNLTHQDNVPSWGLARVSTRKPGGTTYYYDPSAGKGVTAYVIDTGIDTKHEDFGGRAKWGKNLVDQMDEDCNGHGTHVAGTVGGTKYGLAKGVSLVAVKVLDCEGSGSNSGVIKGMEWAMMDASGGGNGTAKAAGKAVMNMSLGGPRSEATNQAAKAISDAGIFLAVAAGNENMDAQHSSPASEPSVCTVAASTKDDGKANFSNFGSVVDVYAPGKDIVSLKPGGGTDTLSGTSMASPHVCGLGAYLIGLGKQGGPGLCDTIKEMANDAIQSPGEDTTSKLIYNGSGK</sequence>